<protein>
    <recommendedName>
        <fullName evidence="1">Hemagglutinin</fullName>
    </recommendedName>
    <component>
        <recommendedName>
            <fullName evidence="1">Hemagglutinin HA1 chain</fullName>
        </recommendedName>
    </component>
    <component>
        <recommendedName>
            <fullName evidence="1">Hemagglutinin HA2 chain</fullName>
        </recommendedName>
    </component>
</protein>
<proteinExistence type="evidence at protein level"/>
<sequence length="561" mass="62107">MYKVVVIIALLGAVRGLDKICLGHHAVANGTIVKTLTNVQEEVTNATETVESTSLNRLCMKGRSYKDLGNCHPIGMLIGTPACDLHLTGTWDTLIERKNAIAYCYPGTTINEGALRQKIMESGGISKTSTGFAYGSSINSAGTTKACMRNGGDSFYAEVKWLVSKDKGQNFPQTTNTYRNTDTAEHLIIWGIHHPSSTQEKNDLYGTQSLSISVGSSTYQNNFVPVVRARPQVNGQSGRIDFHWTLVQPGDNITFSHNGGRIAPSRVSKLVGRGLGIQSEASIDNGCESKCFWRGGSINTKLPFQNLSPRTVGQCPKYVNKKSLMLATGMRNVPEIMQGRGLFGAIAGFIENGWEGMVDGWYGFRHQNAQGTGQAADYKSTQAAIDQITGKLNRLIEKTNTEFESIESEFSEIEHQIGNVINWTKDSITDIWTYQAELLVAMENQHTIDMADSEMLNLYERVRKQLRQNAEEDGKGCFEIYHTCDDSCMESIRNNTYDHSQYREEALLNRLNINSVKLSSGYKDIILWFSFGASCFVLLAAVMGLVFFCLKNGNMQCTICI</sequence>
<organismHost>
    <name type="scientific">Aves</name>
    <dbReference type="NCBI Taxonomy" id="8782"/>
</organismHost>
<gene>
    <name evidence="1" type="primary">HA</name>
</gene>
<feature type="signal peptide" evidence="1">
    <location>
        <begin position="1"/>
        <end position="16"/>
    </location>
</feature>
<feature type="chain" id="PRO_0000440383" description="Hemagglutinin" evidence="1">
    <location>
        <begin position="17"/>
        <end position="561"/>
    </location>
</feature>
<feature type="chain" id="PRO_0000038893" description="Hemagglutinin HA1 chain" evidence="1">
    <location>
        <begin position="17"/>
        <end position="339"/>
    </location>
</feature>
<feature type="chain" id="PRO_0000038894" description="Hemagglutinin HA2 chain" evidence="1">
    <location>
        <begin position="341"/>
        <end position="561"/>
    </location>
</feature>
<feature type="topological domain" description="Extracellular" evidence="1">
    <location>
        <begin position="17"/>
        <end position="524"/>
    </location>
</feature>
<feature type="transmembrane region" description="Helical" evidence="1">
    <location>
        <begin position="525"/>
        <end position="545"/>
    </location>
</feature>
<feature type="topological domain" description="Cytoplasmic" evidence="1">
    <location>
        <begin position="546"/>
        <end position="561"/>
    </location>
</feature>
<feature type="site" description="Cleavage; by host" evidence="1">
    <location>
        <begin position="340"/>
        <end position="341"/>
    </location>
</feature>
<feature type="lipid moiety-binding region" description="S-palmitoyl cysteine; by host" evidence="1">
    <location>
        <position position="557"/>
    </location>
</feature>
<feature type="lipid moiety-binding region" description="S-palmitoyl cysteine; by host" evidence="1">
    <location>
        <position position="560"/>
    </location>
</feature>
<feature type="glycosylation site" description="N-linked (GlcNAc...) asparagine; by host" evidence="1">
    <location>
        <position position="29"/>
    </location>
</feature>
<feature type="glycosylation site" description="N-linked (GlcNAc...) asparagine; by host" evidence="1">
    <location>
        <position position="45"/>
    </location>
</feature>
<feature type="glycosylation site" description="N-linked (GlcNAc...) asparagine; by host" evidence="1">
    <location>
        <position position="252"/>
    </location>
</feature>
<feature type="glycosylation site" description="N-linked (GlcNAc...) asparagine; by host" evidence="1">
    <location>
        <position position="422"/>
    </location>
</feature>
<feature type="glycosylation site" description="N-linked (GlcNAc...) asparagine; by host" evidence="1">
    <location>
        <position position="494"/>
    </location>
</feature>
<feature type="disulfide bond" description="Interchain (between HA1 and HA2 chains)" evidence="1">
    <location>
        <begin position="21"/>
        <end position="477"/>
    </location>
</feature>
<feature type="disulfide bond" evidence="1">
    <location>
        <begin position="59"/>
        <end position="287"/>
    </location>
</feature>
<feature type="disulfide bond" evidence="1">
    <location>
        <begin position="71"/>
        <end position="83"/>
    </location>
</feature>
<feature type="disulfide bond" evidence="1">
    <location>
        <begin position="104"/>
        <end position="147"/>
    </location>
</feature>
<feature type="disulfide bond" evidence="1">
    <location>
        <begin position="291"/>
        <end position="315"/>
    </location>
</feature>
<feature type="disulfide bond" evidence="1">
    <location>
        <begin position="484"/>
        <end position="488"/>
    </location>
</feature>
<feature type="helix" evidence="3">
    <location>
        <begin position="345"/>
        <end position="349"/>
    </location>
</feature>
<feature type="strand" evidence="3">
    <location>
        <begin position="361"/>
        <end position="368"/>
    </location>
</feature>
<feature type="strand" evidence="3">
    <location>
        <begin position="371"/>
        <end position="376"/>
    </location>
</feature>
<feature type="helix" evidence="3">
    <location>
        <begin position="378"/>
        <end position="394"/>
    </location>
</feature>
<feature type="strand" evidence="3">
    <location>
        <begin position="409"/>
        <end position="411"/>
    </location>
</feature>
<feature type="helix" evidence="3">
    <location>
        <begin position="415"/>
        <end position="466"/>
    </location>
</feature>
<feature type="helix" evidence="3">
    <location>
        <begin position="467"/>
        <end position="469"/>
    </location>
</feature>
<feature type="strand" evidence="3">
    <location>
        <begin position="470"/>
        <end position="472"/>
    </location>
</feature>
<feature type="strand" evidence="3">
    <location>
        <begin position="474"/>
        <end position="482"/>
    </location>
</feature>
<feature type="helix" evidence="3">
    <location>
        <begin position="486"/>
        <end position="493"/>
    </location>
</feature>
<feature type="helix" evidence="3">
    <location>
        <begin position="499"/>
        <end position="510"/>
    </location>
</feature>
<name>HEMA_I49A0</name>
<evidence type="ECO:0000255" key="1">
    <source>
        <dbReference type="HAMAP-Rule" id="MF_04072"/>
    </source>
</evidence>
<evidence type="ECO:0000305" key="2"/>
<evidence type="ECO:0007829" key="3">
    <source>
        <dbReference type="PDB" id="4D00"/>
    </source>
</evidence>
<accession>P12581</accession>
<reference key="1">
    <citation type="journal article" date="1988" name="Virology">
        <title>The structure of serotype H10 hemagglutinin of influenza A virus: comparison of an apathogenic avian and a mammalian strain pathogenic for mink.</title>
        <authorList>
            <person name="Feldmann H."/>
            <person name="Kretzschmar E."/>
            <person name="Klingeborn B."/>
            <person name="Rott R."/>
            <person name="Klenk H.-D."/>
            <person name="Garten W."/>
        </authorList>
    </citation>
    <scope>NUCLEOTIDE SEQUENCE [GENOMIC RNA]</scope>
</reference>
<keyword id="KW-0002">3D-structure</keyword>
<keyword id="KW-1167">Clathrin- and caveolin-independent endocytosis of virus by host</keyword>
<keyword id="KW-1165">Clathrin-mediated endocytosis of virus by host</keyword>
<keyword id="KW-1015">Disulfide bond</keyword>
<keyword id="KW-1170">Fusion of virus membrane with host endosomal membrane</keyword>
<keyword id="KW-1168">Fusion of virus membrane with host membrane</keyword>
<keyword id="KW-0325">Glycoprotein</keyword>
<keyword id="KW-0348">Hemagglutinin</keyword>
<keyword id="KW-1032">Host cell membrane</keyword>
<keyword id="KW-1043">Host membrane</keyword>
<keyword id="KW-0945">Host-virus interaction</keyword>
<keyword id="KW-0449">Lipoprotein</keyword>
<keyword id="KW-0472">Membrane</keyword>
<keyword id="KW-0564">Palmitate</keyword>
<keyword id="KW-0732">Signal</keyword>
<keyword id="KW-0812">Transmembrane</keyword>
<keyword id="KW-1133">Transmembrane helix</keyword>
<keyword id="KW-1161">Viral attachment to host cell</keyword>
<keyword id="KW-0261">Viral envelope protein</keyword>
<keyword id="KW-1162">Viral penetration into host cytoplasm</keyword>
<keyword id="KW-0946">Virion</keyword>
<keyword id="KW-1164">Virus endocytosis by host</keyword>
<keyword id="KW-1160">Virus entry into host cell</keyword>
<comment type="function">
    <text>Binds to sialic acid-containing receptors on the cell surface, bringing about the attachment of the virus particle to the cell. This attachment induces virion internalization of about two third of the virus particles through clathrin-dependent endocytosis and about one third through a clathrin- and caveolin-independent pathway. Plays a major role in the determination of host range restriction and virulence. Class I viral fusion protein. Responsible for penetration of the virus into the cell cytoplasm by mediating the fusion of the membrane of the endocytosed virus particle with the endosomal membrane. Low pH in endosomes induces an irreversible conformational change in HA2, releasing the fusion hydrophobic peptide. Several trimers are required to form a competent fusion pore.</text>
</comment>
<comment type="function">
    <text evidence="1">Binds to sialic acid-containing receptors on the cell surface, bringing about the attachment of the virus particle to the cell. This attachment induces virion internalization either through clathrin-dependent endocytosis or through clathrin- and caveolin-independent pathway. Plays a major role in the determination of host range restriction and virulence. Class I viral fusion protein. Responsible for penetration of the virus into the cell cytoplasm by mediating the fusion of the membrane of the endocytosed virus particle with the endosomal membrane. Low pH in endosomes induces an irreversible conformational change in HA2, releasing the fusion hydrophobic peptide. Several trimers are required to form a competent fusion pore.</text>
</comment>
<comment type="subunit">
    <text evidence="1">Homotrimer of disulfide-linked HA1-HA2.</text>
</comment>
<comment type="subcellular location">
    <subcellularLocation>
        <location evidence="1">Virion membrane</location>
        <topology evidence="1">Single-pass type I membrane protein</topology>
    </subcellularLocation>
    <subcellularLocation>
        <location evidence="1">Host apical cell membrane</location>
        <topology evidence="1">Single-pass type I membrane protein</topology>
    </subcellularLocation>
    <text evidence="1">Targeted to the apical plasma membrane in epithelial polarized cells through a signal present in the transmembrane domain. Associated with glycosphingolipid- and cholesterol-enriched detergent-resistant lipid rafts.</text>
</comment>
<comment type="PTM">
    <text evidence="1">Palmitoylated.</text>
</comment>
<comment type="PTM">
    <text evidence="1">In natural infection, inactive HA is matured into HA1 and HA2 outside the cell by one or more trypsin-like, arginine-specific endoprotease secreted by the bronchial epithelial cells. One identified protease that may be involved in this process is secreted in lungs by club cells.</text>
</comment>
<comment type="miscellaneous">
    <text>Major glycoprotein, comprises over 80% of the envelope proteins present in virus particle.</text>
</comment>
<comment type="miscellaneous">
    <text>The extent of infection into host organism is determined by HA. Influenza viruses bud from the apical surface of polarized epithelial cells (e.g. bronchial epithelial cells) into lumen of lungs and are therefore usually pneumotropic. The reason is that HA is cleaved by tryptase clara which is restricted to lungs. However, HAs of H5 and H7 pantropic avian viruses subtypes can be cleaved by furin and subtilisin-type enzymes, allowing the virus to grow in other organs than lungs.</text>
</comment>
<comment type="miscellaneous">
    <text evidence="2">The influenza A genome consist of 8 RNA segments. Genetic variation of hemagglutinin and/or neuraminidase genes results in the emergence of new influenza strains. The mechanism of variation can be the result of point mutations or the result of genetic reassortment between segments of two different strains.</text>
</comment>
<comment type="similarity">
    <text evidence="1">Belongs to the influenza viruses hemagglutinin family.</text>
</comment>
<dbReference type="EMBL" id="M21646">
    <property type="protein sequence ID" value="AAA79774.1"/>
    <property type="molecule type" value="Genomic_RNA"/>
</dbReference>
<dbReference type="PDB" id="4D00">
    <property type="method" value="X-ray"/>
    <property type="resolution" value="2.50 A"/>
    <property type="chains" value="B/D/F=341-523"/>
</dbReference>
<dbReference type="PDBsum" id="4D00"/>
<dbReference type="SMR" id="P12581"/>
<dbReference type="GlyCosmos" id="P12581">
    <property type="glycosylation" value="5 sites, No reported glycans"/>
</dbReference>
<dbReference type="GO" id="GO:0020002">
    <property type="term" value="C:host cell plasma membrane"/>
    <property type="evidence" value="ECO:0007669"/>
    <property type="project" value="UniProtKB-SubCell"/>
</dbReference>
<dbReference type="GO" id="GO:0016020">
    <property type="term" value="C:membrane"/>
    <property type="evidence" value="ECO:0007669"/>
    <property type="project" value="UniProtKB-UniRule"/>
</dbReference>
<dbReference type="GO" id="GO:0019031">
    <property type="term" value="C:viral envelope"/>
    <property type="evidence" value="ECO:0007669"/>
    <property type="project" value="UniProtKB-UniRule"/>
</dbReference>
<dbReference type="GO" id="GO:0055036">
    <property type="term" value="C:virion membrane"/>
    <property type="evidence" value="ECO:0007669"/>
    <property type="project" value="UniProtKB-SubCell"/>
</dbReference>
<dbReference type="GO" id="GO:0046789">
    <property type="term" value="F:host cell surface receptor binding"/>
    <property type="evidence" value="ECO:0007669"/>
    <property type="project" value="UniProtKB-UniRule"/>
</dbReference>
<dbReference type="GO" id="GO:0075512">
    <property type="term" value="P:clathrin-dependent endocytosis of virus by host cell"/>
    <property type="evidence" value="ECO:0007669"/>
    <property type="project" value="UniProtKB-UniRule"/>
</dbReference>
<dbReference type="GO" id="GO:0039654">
    <property type="term" value="P:fusion of virus membrane with host endosome membrane"/>
    <property type="evidence" value="ECO:0007669"/>
    <property type="project" value="UniProtKB-UniRule"/>
</dbReference>
<dbReference type="GO" id="GO:0019064">
    <property type="term" value="P:fusion of virus membrane with host plasma membrane"/>
    <property type="evidence" value="ECO:0007669"/>
    <property type="project" value="InterPro"/>
</dbReference>
<dbReference type="GO" id="GO:0046761">
    <property type="term" value="P:viral budding from plasma membrane"/>
    <property type="evidence" value="ECO:0007669"/>
    <property type="project" value="UniProtKB-UniRule"/>
</dbReference>
<dbReference type="GO" id="GO:0019062">
    <property type="term" value="P:virion attachment to host cell"/>
    <property type="evidence" value="ECO:0007669"/>
    <property type="project" value="UniProtKB-KW"/>
</dbReference>
<dbReference type="Gene3D" id="3.90.20.10">
    <property type="match status" value="1"/>
</dbReference>
<dbReference type="Gene3D" id="3.90.209.20">
    <property type="match status" value="1"/>
</dbReference>
<dbReference type="Gene3D" id="2.10.77.10">
    <property type="entry name" value="Hemagglutinin Chain A, Domain 2"/>
    <property type="match status" value="2"/>
</dbReference>
<dbReference type="HAMAP" id="MF_04072">
    <property type="entry name" value="INFV_HEMA"/>
    <property type="match status" value="1"/>
</dbReference>
<dbReference type="InterPro" id="IPR008980">
    <property type="entry name" value="Capsid_hemagglutn"/>
</dbReference>
<dbReference type="InterPro" id="IPR013828">
    <property type="entry name" value="Hemagglutn_HA1_a/b_dom_sf"/>
</dbReference>
<dbReference type="InterPro" id="IPR000149">
    <property type="entry name" value="Hemagglutn_influenz_A"/>
</dbReference>
<dbReference type="InterPro" id="IPR001364">
    <property type="entry name" value="Hemagglutn_influenz_A/B"/>
</dbReference>
<dbReference type="Pfam" id="PF00509">
    <property type="entry name" value="Hemagglutinin"/>
    <property type="match status" value="1"/>
</dbReference>
<dbReference type="PRINTS" id="PR00330">
    <property type="entry name" value="HEMAGGLUTN1"/>
</dbReference>
<dbReference type="PRINTS" id="PR00329">
    <property type="entry name" value="HEMAGGLUTN12"/>
</dbReference>
<dbReference type="SUPFAM" id="SSF58064">
    <property type="entry name" value="Influenza hemagglutinin (stalk)"/>
    <property type="match status" value="1"/>
</dbReference>
<dbReference type="SUPFAM" id="SSF49818">
    <property type="entry name" value="Viral protein domain"/>
    <property type="match status" value="1"/>
</dbReference>
<organism>
    <name type="scientific">Influenza A virus (strain A/Chicken/Germany/n/1949 H10N7)</name>
    <dbReference type="NCBI Taxonomy" id="11339"/>
    <lineage>
        <taxon>Viruses</taxon>
        <taxon>Riboviria</taxon>
        <taxon>Orthornavirae</taxon>
        <taxon>Negarnaviricota</taxon>
        <taxon>Polyploviricotina</taxon>
        <taxon>Insthoviricetes</taxon>
        <taxon>Articulavirales</taxon>
        <taxon>Orthomyxoviridae</taxon>
        <taxon>Alphainfluenzavirus</taxon>
        <taxon>Alphainfluenzavirus influenzae</taxon>
        <taxon>Influenza A virus</taxon>
    </lineage>
</organism>